<keyword id="KW-0012">Acyltransferase</keyword>
<keyword id="KW-0028">Amino-acid biosynthesis</keyword>
<keyword id="KW-0963">Cytoplasm</keyword>
<keyword id="KW-0486">Methionine biosynthesis</keyword>
<keyword id="KW-0808">Transferase</keyword>
<name>METXS_ACIB5</name>
<sequence length="386" mass="43322">MSFPADSVGLVTPQKFQFEEPLHLECGRVLPRFELMVETYGTLNADKSNAILICHALSGHHHAAGYHHEDDKKAGWWDSCIGPGKAIDTNKFFVVALNNIGGCSGSTGPTSPNPENDNRPYGPDFPLVTVRDWVKTQAMLSDRLGISVWYAVVGGSLGGMQALQWSVDYPDRLQKCVVIASAPKLSAQNIAFNEVARQSILSDPDFHHGRYLEKDSYPKRGLILARMVGHITYLSEEAMKQKFGRDLKSGKFMYGFDVEFQVESYLRYQGEQFSRNFDANTYLIMTKALDYFDPSREYGHSLTEAMSKTKCQFLIVSFTTDWRFAPSRSQEIVDALITNQKPVSYLDIDAEQGHDSFLFPIPLYVKTLRAFLGGEEHLKSTSLEAS</sequence>
<protein>
    <recommendedName>
        <fullName evidence="1">Homoserine O-succinyltransferase</fullName>
        <shortName evidence="1">HST</shortName>
        <ecNumber evidence="1">2.3.1.46</ecNumber>
    </recommendedName>
    <alternativeName>
        <fullName evidence="1">Homoserine transsuccinylase</fullName>
        <shortName evidence="1">HTS</shortName>
    </alternativeName>
</protein>
<feature type="chain" id="PRO_1000119456" description="Homoserine O-succinyltransferase">
    <location>
        <begin position="1"/>
        <end position="386"/>
    </location>
</feature>
<feature type="domain" description="AB hydrolase-1" evidence="1">
    <location>
        <begin position="49"/>
        <end position="358"/>
    </location>
</feature>
<feature type="active site" description="Nucleophile" evidence="1">
    <location>
        <position position="156"/>
    </location>
</feature>
<feature type="active site" evidence="1">
    <location>
        <position position="321"/>
    </location>
</feature>
<feature type="active site" evidence="1">
    <location>
        <position position="354"/>
    </location>
</feature>
<feature type="binding site" evidence="1">
    <location>
        <position position="226"/>
    </location>
    <ligand>
        <name>substrate</name>
    </ligand>
</feature>
<feature type="binding site" evidence="1">
    <location>
        <position position="355"/>
    </location>
    <ligand>
        <name>substrate</name>
    </ligand>
</feature>
<feature type="site" description="Important for acyl-CoA specificity" evidence="1">
    <location>
        <position position="323"/>
    </location>
</feature>
<organism>
    <name type="scientific">Acinetobacter baumannii (strain AB0057)</name>
    <dbReference type="NCBI Taxonomy" id="480119"/>
    <lineage>
        <taxon>Bacteria</taxon>
        <taxon>Pseudomonadati</taxon>
        <taxon>Pseudomonadota</taxon>
        <taxon>Gammaproteobacteria</taxon>
        <taxon>Moraxellales</taxon>
        <taxon>Moraxellaceae</taxon>
        <taxon>Acinetobacter</taxon>
        <taxon>Acinetobacter calcoaceticus/baumannii complex</taxon>
    </lineage>
</organism>
<evidence type="ECO:0000255" key="1">
    <source>
        <dbReference type="HAMAP-Rule" id="MF_00296"/>
    </source>
</evidence>
<gene>
    <name evidence="1" type="primary">metXS</name>
    <name type="ordered locus">AB57_0575</name>
</gene>
<reference key="1">
    <citation type="journal article" date="2008" name="J. Bacteriol.">
        <title>Comparative genome sequence analysis of multidrug-resistant Acinetobacter baumannii.</title>
        <authorList>
            <person name="Adams M.D."/>
            <person name="Goglin K."/>
            <person name="Molyneaux N."/>
            <person name="Hujer K.M."/>
            <person name="Lavender H."/>
            <person name="Jamison J.J."/>
            <person name="MacDonald I.J."/>
            <person name="Martin K.M."/>
            <person name="Russo T."/>
            <person name="Campagnari A.A."/>
            <person name="Hujer A.M."/>
            <person name="Bonomo R.A."/>
            <person name="Gill S.R."/>
        </authorList>
    </citation>
    <scope>NUCLEOTIDE SEQUENCE [LARGE SCALE GENOMIC DNA]</scope>
    <source>
        <strain>AB0057</strain>
    </source>
</reference>
<comment type="function">
    <text evidence="1">Transfers a succinyl group from succinyl-CoA to L-homoserine, forming succinyl-L-homoserine.</text>
</comment>
<comment type="catalytic activity">
    <reaction evidence="1">
        <text>L-homoserine + succinyl-CoA = O-succinyl-L-homoserine + CoA</text>
        <dbReference type="Rhea" id="RHEA:22008"/>
        <dbReference type="ChEBI" id="CHEBI:57287"/>
        <dbReference type="ChEBI" id="CHEBI:57292"/>
        <dbReference type="ChEBI" id="CHEBI:57476"/>
        <dbReference type="ChEBI" id="CHEBI:57661"/>
        <dbReference type="EC" id="2.3.1.46"/>
    </reaction>
</comment>
<comment type="pathway">
    <text evidence="1">Amino-acid biosynthesis; L-methionine biosynthesis via de novo pathway; O-succinyl-L-homoserine from L-homoserine: step 1/1.</text>
</comment>
<comment type="subunit">
    <text evidence="1">Homodimer.</text>
</comment>
<comment type="subcellular location">
    <subcellularLocation>
        <location evidence="1">Cytoplasm</location>
    </subcellularLocation>
</comment>
<comment type="similarity">
    <text evidence="1">Belongs to the AB hydrolase superfamily. MetX family.</text>
</comment>
<accession>B7I4X4</accession>
<proteinExistence type="inferred from homology"/>
<dbReference type="EC" id="2.3.1.46" evidence="1"/>
<dbReference type="EMBL" id="CP001182">
    <property type="protein sequence ID" value="ACJ39996.1"/>
    <property type="molecule type" value="Genomic_DNA"/>
</dbReference>
<dbReference type="SMR" id="B7I4X4"/>
<dbReference type="ESTHER" id="acib3-metx">
    <property type="family name" value="Homoserine_transacetylase"/>
</dbReference>
<dbReference type="KEGG" id="abn:AB57_0575"/>
<dbReference type="HOGENOM" id="CLU_028760_1_2_6"/>
<dbReference type="UniPathway" id="UPA00051">
    <property type="reaction ID" value="UER00075"/>
</dbReference>
<dbReference type="Proteomes" id="UP000007094">
    <property type="component" value="Chromosome"/>
</dbReference>
<dbReference type="GO" id="GO:0005737">
    <property type="term" value="C:cytoplasm"/>
    <property type="evidence" value="ECO:0007669"/>
    <property type="project" value="UniProtKB-SubCell"/>
</dbReference>
<dbReference type="GO" id="GO:0004414">
    <property type="term" value="F:homoserine O-acetyltransferase activity"/>
    <property type="evidence" value="ECO:0007669"/>
    <property type="project" value="TreeGrafter"/>
</dbReference>
<dbReference type="GO" id="GO:0008899">
    <property type="term" value="F:homoserine O-succinyltransferase activity"/>
    <property type="evidence" value="ECO:0007669"/>
    <property type="project" value="UniProtKB-UniRule"/>
</dbReference>
<dbReference type="GO" id="GO:0009092">
    <property type="term" value="P:homoserine metabolic process"/>
    <property type="evidence" value="ECO:0007669"/>
    <property type="project" value="TreeGrafter"/>
</dbReference>
<dbReference type="GO" id="GO:0009086">
    <property type="term" value="P:methionine biosynthetic process"/>
    <property type="evidence" value="ECO:0007669"/>
    <property type="project" value="UniProtKB-UniRule"/>
</dbReference>
<dbReference type="FunFam" id="1.10.1740.110:FF:000001">
    <property type="entry name" value="Homoserine O-acetyltransferase"/>
    <property type="match status" value="1"/>
</dbReference>
<dbReference type="Gene3D" id="1.10.1740.110">
    <property type="match status" value="1"/>
</dbReference>
<dbReference type="Gene3D" id="3.40.50.1820">
    <property type="entry name" value="alpha/beta hydrolase"/>
    <property type="match status" value="1"/>
</dbReference>
<dbReference type="HAMAP" id="MF_00296">
    <property type="entry name" value="MetX_acyltransf"/>
    <property type="match status" value="1"/>
</dbReference>
<dbReference type="InterPro" id="IPR000073">
    <property type="entry name" value="AB_hydrolase_1"/>
</dbReference>
<dbReference type="InterPro" id="IPR029058">
    <property type="entry name" value="AB_hydrolase_fold"/>
</dbReference>
<dbReference type="InterPro" id="IPR008220">
    <property type="entry name" value="HAT_MetX-like"/>
</dbReference>
<dbReference type="NCBIfam" id="TIGR01392">
    <property type="entry name" value="homoserO_Ac_trn"/>
    <property type="match status" value="1"/>
</dbReference>
<dbReference type="NCBIfam" id="NF001209">
    <property type="entry name" value="PRK00175.1"/>
    <property type="match status" value="1"/>
</dbReference>
<dbReference type="PANTHER" id="PTHR32268">
    <property type="entry name" value="HOMOSERINE O-ACETYLTRANSFERASE"/>
    <property type="match status" value="1"/>
</dbReference>
<dbReference type="PANTHER" id="PTHR32268:SF11">
    <property type="entry name" value="HOMOSERINE O-ACETYLTRANSFERASE"/>
    <property type="match status" value="1"/>
</dbReference>
<dbReference type="Pfam" id="PF00561">
    <property type="entry name" value="Abhydrolase_1"/>
    <property type="match status" value="1"/>
</dbReference>
<dbReference type="PIRSF" id="PIRSF000443">
    <property type="entry name" value="Homoser_Ac_trans"/>
    <property type="match status" value="1"/>
</dbReference>
<dbReference type="SUPFAM" id="SSF53474">
    <property type="entry name" value="alpha/beta-Hydrolases"/>
    <property type="match status" value="1"/>
</dbReference>